<evidence type="ECO:0000255" key="1">
    <source>
        <dbReference type="HAMAP-Rule" id="MF_01852"/>
    </source>
</evidence>
<proteinExistence type="inferred from homology"/>
<feature type="chain" id="PRO_0000353029" description="Threonylcarbamoyl-AMP synthase">
    <location>
        <begin position="1"/>
        <end position="190"/>
    </location>
</feature>
<feature type="domain" description="YrdC-like" evidence="1">
    <location>
        <begin position="7"/>
        <end position="190"/>
    </location>
</feature>
<dbReference type="EC" id="2.7.7.87" evidence="1"/>
<dbReference type="EMBL" id="CP000720">
    <property type="protein sequence ID" value="ABS47191.1"/>
    <property type="molecule type" value="Genomic_DNA"/>
</dbReference>
<dbReference type="RefSeq" id="WP_002209025.1">
    <property type="nucleotide sequence ID" value="NC_009708.1"/>
</dbReference>
<dbReference type="SMR" id="A7FNJ8"/>
<dbReference type="GeneID" id="57974358"/>
<dbReference type="KEGG" id="ypi:YpsIP31758_3878"/>
<dbReference type="HOGENOM" id="CLU_031397_6_0_6"/>
<dbReference type="Proteomes" id="UP000002412">
    <property type="component" value="Chromosome"/>
</dbReference>
<dbReference type="GO" id="GO:0005737">
    <property type="term" value="C:cytoplasm"/>
    <property type="evidence" value="ECO:0007669"/>
    <property type="project" value="UniProtKB-SubCell"/>
</dbReference>
<dbReference type="GO" id="GO:0005524">
    <property type="term" value="F:ATP binding"/>
    <property type="evidence" value="ECO:0007669"/>
    <property type="project" value="UniProtKB-UniRule"/>
</dbReference>
<dbReference type="GO" id="GO:0003725">
    <property type="term" value="F:double-stranded RNA binding"/>
    <property type="evidence" value="ECO:0007669"/>
    <property type="project" value="InterPro"/>
</dbReference>
<dbReference type="GO" id="GO:0061710">
    <property type="term" value="F:L-threonylcarbamoyladenylate synthase"/>
    <property type="evidence" value="ECO:0007669"/>
    <property type="project" value="UniProtKB-EC"/>
</dbReference>
<dbReference type="GO" id="GO:0000049">
    <property type="term" value="F:tRNA binding"/>
    <property type="evidence" value="ECO:0007669"/>
    <property type="project" value="TreeGrafter"/>
</dbReference>
<dbReference type="GO" id="GO:0006450">
    <property type="term" value="P:regulation of translational fidelity"/>
    <property type="evidence" value="ECO:0007669"/>
    <property type="project" value="TreeGrafter"/>
</dbReference>
<dbReference type="GO" id="GO:0002949">
    <property type="term" value="P:tRNA threonylcarbamoyladenosine modification"/>
    <property type="evidence" value="ECO:0007669"/>
    <property type="project" value="UniProtKB-UniRule"/>
</dbReference>
<dbReference type="FunFam" id="3.90.870.10:FF:000004">
    <property type="entry name" value="Threonylcarbamoyl-AMP synthase"/>
    <property type="match status" value="1"/>
</dbReference>
<dbReference type="Gene3D" id="3.90.870.10">
    <property type="entry name" value="DHBP synthase"/>
    <property type="match status" value="1"/>
</dbReference>
<dbReference type="HAMAP" id="MF_01852">
    <property type="entry name" value="TsaC"/>
    <property type="match status" value="1"/>
</dbReference>
<dbReference type="InterPro" id="IPR017945">
    <property type="entry name" value="DHBP_synth_RibB-like_a/b_dom"/>
</dbReference>
<dbReference type="InterPro" id="IPR006070">
    <property type="entry name" value="Sua5-like_dom"/>
</dbReference>
<dbReference type="InterPro" id="IPR023535">
    <property type="entry name" value="TC-AMP_synthase"/>
</dbReference>
<dbReference type="InterPro" id="IPR050156">
    <property type="entry name" value="TC-AMP_synthase_SUA5"/>
</dbReference>
<dbReference type="NCBIfam" id="NF007919">
    <property type="entry name" value="PRK10634.1"/>
    <property type="match status" value="1"/>
</dbReference>
<dbReference type="PANTHER" id="PTHR17490">
    <property type="entry name" value="SUA5"/>
    <property type="match status" value="1"/>
</dbReference>
<dbReference type="PANTHER" id="PTHR17490:SF18">
    <property type="entry name" value="THREONYLCARBAMOYL-AMP SYNTHASE"/>
    <property type="match status" value="1"/>
</dbReference>
<dbReference type="Pfam" id="PF01300">
    <property type="entry name" value="Sua5_yciO_yrdC"/>
    <property type="match status" value="1"/>
</dbReference>
<dbReference type="SUPFAM" id="SSF55821">
    <property type="entry name" value="YrdC/RibB"/>
    <property type="match status" value="1"/>
</dbReference>
<dbReference type="PROSITE" id="PS51163">
    <property type="entry name" value="YRDC"/>
    <property type="match status" value="1"/>
</dbReference>
<comment type="function">
    <text evidence="1">Required for the formation of a threonylcarbamoyl group on adenosine at position 37 (t(6)A37) in tRNAs that read codons beginning with adenine. Catalyzes the conversion of L-threonine, HCO(3)(-)/CO(2) and ATP to give threonylcarbamoyl-AMP (TC-AMP) as the acyladenylate intermediate, with the release of diphosphate.</text>
</comment>
<comment type="catalytic activity">
    <reaction evidence="1">
        <text>L-threonine + hydrogencarbonate + ATP = L-threonylcarbamoyladenylate + diphosphate + H2O</text>
        <dbReference type="Rhea" id="RHEA:36407"/>
        <dbReference type="ChEBI" id="CHEBI:15377"/>
        <dbReference type="ChEBI" id="CHEBI:17544"/>
        <dbReference type="ChEBI" id="CHEBI:30616"/>
        <dbReference type="ChEBI" id="CHEBI:33019"/>
        <dbReference type="ChEBI" id="CHEBI:57926"/>
        <dbReference type="ChEBI" id="CHEBI:73682"/>
        <dbReference type="EC" id="2.7.7.87"/>
    </reaction>
</comment>
<comment type="subcellular location">
    <subcellularLocation>
        <location evidence="1">Cytoplasm</location>
    </subcellularLocation>
</comment>
<comment type="similarity">
    <text evidence="1">Belongs to the SUA5 family. TsaC subfamily.</text>
</comment>
<gene>
    <name evidence="1" type="primary">tsaC</name>
    <name type="synonym">rimN</name>
    <name type="ordered locus">YpsIP31758_3878</name>
</gene>
<keyword id="KW-0067">ATP-binding</keyword>
<keyword id="KW-0963">Cytoplasm</keyword>
<keyword id="KW-0547">Nucleotide-binding</keyword>
<keyword id="KW-0548">Nucleotidyltransferase</keyword>
<keyword id="KW-0808">Transferase</keyword>
<keyword id="KW-0819">tRNA processing</keyword>
<name>TSAC_YERP3</name>
<organism>
    <name type="scientific">Yersinia pseudotuberculosis serotype O:1b (strain IP 31758)</name>
    <dbReference type="NCBI Taxonomy" id="349747"/>
    <lineage>
        <taxon>Bacteria</taxon>
        <taxon>Pseudomonadati</taxon>
        <taxon>Pseudomonadota</taxon>
        <taxon>Gammaproteobacteria</taxon>
        <taxon>Enterobacterales</taxon>
        <taxon>Yersiniaceae</taxon>
        <taxon>Yersinia</taxon>
    </lineage>
</organism>
<reference key="1">
    <citation type="journal article" date="2007" name="PLoS Genet.">
        <title>The complete genome sequence of Yersinia pseudotuberculosis IP31758, the causative agent of Far East scarlet-like fever.</title>
        <authorList>
            <person name="Eppinger M."/>
            <person name="Rosovitz M.J."/>
            <person name="Fricke W.F."/>
            <person name="Rasko D.A."/>
            <person name="Kokorina G."/>
            <person name="Fayolle C."/>
            <person name="Lindler L.E."/>
            <person name="Carniel E."/>
            <person name="Ravel J."/>
        </authorList>
    </citation>
    <scope>NUCLEOTIDE SEQUENCE [LARGE SCALE GENOMIC DNA]</scope>
    <source>
        <strain>IP 31758</strain>
    </source>
</reference>
<protein>
    <recommendedName>
        <fullName evidence="1">Threonylcarbamoyl-AMP synthase</fullName>
        <shortName evidence="1">TC-AMP synthase</shortName>
        <ecNumber evidence="1">2.7.7.87</ecNumber>
    </recommendedName>
    <alternativeName>
        <fullName evidence="1">L-threonylcarbamoyladenylate synthase</fullName>
    </alternativeName>
    <alternativeName>
        <fullName evidence="1">t(6)A37 threonylcarbamoyladenosine biosynthesis protein TsaC</fullName>
    </alternativeName>
    <alternativeName>
        <fullName evidence="1">tRNA threonylcarbamoyladenosine biosynthesis protein TsaC</fullName>
    </alternativeName>
</protein>
<accession>A7FNJ8</accession>
<sequence length="190" mass="21153">MNQQENNFVLADIVRALRQEEVIAYPTEAVFGLGCDPDSEKAVNTLLALKQRPWQKGLILVAANYAQLEPYINDSMLNEIQRETLFSTWPGPITWVIPARVETPQWLTGCFDSLAVRVSNHPLVQQLCAEYGKPLVSTSANLSGHEPCRTEEEVRIQFGPSLPVLSGHVGGRLNPSEIRDALTGKRFRQG</sequence>